<feature type="chain" id="PRO_0000240247" description="Coiled-coil domain-containing protein 62">
    <location>
        <begin position="1"/>
        <end position="684"/>
    </location>
</feature>
<feature type="region of interest" description="Disordered" evidence="3">
    <location>
        <begin position="579"/>
        <end position="603"/>
    </location>
</feature>
<feature type="region of interest" description="Disordered" evidence="3">
    <location>
        <begin position="657"/>
        <end position="684"/>
    </location>
</feature>
<feature type="coiled-coil region" evidence="2">
    <location>
        <begin position="11"/>
        <end position="160"/>
    </location>
</feature>
<feature type="coiled-coil region" evidence="2">
    <location>
        <begin position="199"/>
        <end position="322"/>
    </location>
</feature>
<feature type="short sequence motif" description="LXXLL motif 1">
    <location>
        <begin position="634"/>
        <end position="638"/>
    </location>
</feature>
<feature type="short sequence motif" description="LXXLL motif 2">
    <location>
        <begin position="650"/>
        <end position="654"/>
    </location>
</feature>
<feature type="compositionally biased region" description="Polar residues" evidence="3">
    <location>
        <begin position="594"/>
        <end position="603"/>
    </location>
</feature>
<feature type="compositionally biased region" description="Polar residues" evidence="3">
    <location>
        <begin position="659"/>
        <end position="669"/>
    </location>
</feature>
<feature type="splice variant" id="VSP_019327" description="In isoform 3." evidence="13">
    <location>
        <begin position="1"/>
        <end position="239"/>
    </location>
</feature>
<feature type="splice variant" id="VSP_019328" description="In isoform 3." evidence="13">
    <original>IIRLKQEKSCLHDELLFT</original>
    <variation>MPNSSPKDPTTASGNGSK</variation>
    <location>
        <begin position="240"/>
        <end position="257"/>
    </location>
</feature>
<feature type="splice variant" id="VSP_019329" description="In isoform 2." evidence="13 14 15">
    <original>KSEVPEESAQKNTFVSY</original>
    <variation>ISHLCGRQKADTNTE</variation>
    <location>
        <begin position="668"/>
        <end position="684"/>
    </location>
</feature>
<feature type="sequence variant" id="VAR_035498" description="In a colorectal cancer sample; somatic mutation." evidence="5">
    <original>Q</original>
    <variation>E</variation>
    <location>
        <position position="31"/>
    </location>
</feature>
<feature type="sequence variant" id="VAR_061585" description="In dbSNP:rs58131754.">
    <original>T</original>
    <variation>M</variation>
    <location>
        <position position="141"/>
    </location>
</feature>
<feature type="sequence variant" id="VAR_086975" description="In SPGF67." evidence="10">
    <location>
        <begin position="148"/>
        <end position="684"/>
    </location>
</feature>
<feature type="sequence variant" id="VAR_086976" description="In SPGF67; uncertain significance; dbSNP:rs139198472." evidence="10">
    <original>H</original>
    <variation>Y</variation>
    <location>
        <position position="283"/>
    </location>
</feature>
<feature type="sequence variant" id="VAR_026715" description="In dbSNP:rs17855031." evidence="4">
    <original>T</original>
    <variation>K</variation>
    <location>
        <position position="394"/>
    </location>
</feature>
<feature type="mutagenesis site" description="Abrogates interaction with ESR1 and ESR2." evidence="6 7">
    <original>LL</original>
    <variation>AA</variation>
    <location>
        <begin position="637"/>
        <end position="638"/>
    </location>
</feature>
<feature type="mutagenesis site" description="No effect on interaction with ESR1 or ESR2." evidence="6 7">
    <original>LL</original>
    <variation>AA</variation>
    <location>
        <begin position="653"/>
        <end position="654"/>
    </location>
</feature>
<feature type="sequence conflict" description="In Ref. 2; BAF85155." evidence="16" ref="2">
    <original>C</original>
    <variation>R</variation>
    <location>
        <position position="486"/>
    </location>
</feature>
<feature type="sequence conflict" description="In Ref. 4; AAG49396." evidence="16" ref="4">
    <original>S</original>
    <variation>N</variation>
    <location>
        <position position="651"/>
    </location>
</feature>
<proteinExistence type="evidence at protein level"/>
<gene>
    <name type="primary">CCDC62</name>
</gene>
<name>CCD62_HUMAN</name>
<reference key="1">
    <citation type="submission" date="2003-03" db="EMBL/GenBank/DDBJ databases">
        <title>Cloning and characterization of a novel gene highly expressed in testis.</title>
        <authorList>
            <person name="Shan Y.X."/>
            <person name="Yu L."/>
        </authorList>
    </citation>
    <scope>NUCLEOTIDE SEQUENCE [MRNA] (ISOFORM 2)</scope>
    <scope>TISSUE SPECIFICITY</scope>
</reference>
<reference key="2">
    <citation type="journal article" date="2004" name="Nat. Genet.">
        <title>Complete sequencing and characterization of 21,243 full-length human cDNAs.</title>
        <authorList>
            <person name="Ota T."/>
            <person name="Suzuki Y."/>
            <person name="Nishikawa T."/>
            <person name="Otsuki T."/>
            <person name="Sugiyama T."/>
            <person name="Irie R."/>
            <person name="Wakamatsu A."/>
            <person name="Hayashi K."/>
            <person name="Sato H."/>
            <person name="Nagai K."/>
            <person name="Kimura K."/>
            <person name="Makita H."/>
            <person name="Sekine M."/>
            <person name="Obayashi M."/>
            <person name="Nishi T."/>
            <person name="Shibahara T."/>
            <person name="Tanaka T."/>
            <person name="Ishii S."/>
            <person name="Yamamoto J."/>
            <person name="Saito K."/>
            <person name="Kawai Y."/>
            <person name="Isono Y."/>
            <person name="Nakamura Y."/>
            <person name="Nagahari K."/>
            <person name="Murakami K."/>
            <person name="Yasuda T."/>
            <person name="Iwayanagi T."/>
            <person name="Wagatsuma M."/>
            <person name="Shiratori A."/>
            <person name="Sudo H."/>
            <person name="Hosoiri T."/>
            <person name="Kaku Y."/>
            <person name="Kodaira H."/>
            <person name="Kondo H."/>
            <person name="Sugawara M."/>
            <person name="Takahashi M."/>
            <person name="Kanda K."/>
            <person name="Yokoi T."/>
            <person name="Furuya T."/>
            <person name="Kikkawa E."/>
            <person name="Omura Y."/>
            <person name="Abe K."/>
            <person name="Kamihara K."/>
            <person name="Katsuta N."/>
            <person name="Sato K."/>
            <person name="Tanikawa M."/>
            <person name="Yamazaki M."/>
            <person name="Ninomiya K."/>
            <person name="Ishibashi T."/>
            <person name="Yamashita H."/>
            <person name="Murakawa K."/>
            <person name="Fujimori K."/>
            <person name="Tanai H."/>
            <person name="Kimata M."/>
            <person name="Watanabe M."/>
            <person name="Hiraoka S."/>
            <person name="Chiba Y."/>
            <person name="Ishida S."/>
            <person name="Ono Y."/>
            <person name="Takiguchi S."/>
            <person name="Watanabe S."/>
            <person name="Yosida M."/>
            <person name="Hotuta T."/>
            <person name="Kusano J."/>
            <person name="Kanehori K."/>
            <person name="Takahashi-Fujii A."/>
            <person name="Hara H."/>
            <person name="Tanase T.-O."/>
            <person name="Nomura Y."/>
            <person name="Togiya S."/>
            <person name="Komai F."/>
            <person name="Hara R."/>
            <person name="Takeuchi K."/>
            <person name="Arita M."/>
            <person name="Imose N."/>
            <person name="Musashino K."/>
            <person name="Yuuki H."/>
            <person name="Oshima A."/>
            <person name="Sasaki N."/>
            <person name="Aotsuka S."/>
            <person name="Yoshikawa Y."/>
            <person name="Matsunawa H."/>
            <person name="Ichihara T."/>
            <person name="Shiohata N."/>
            <person name="Sano S."/>
            <person name="Moriya S."/>
            <person name="Momiyama H."/>
            <person name="Satoh N."/>
            <person name="Takami S."/>
            <person name="Terashima Y."/>
            <person name="Suzuki O."/>
            <person name="Nakagawa S."/>
            <person name="Senoh A."/>
            <person name="Mizoguchi H."/>
            <person name="Goto Y."/>
            <person name="Shimizu F."/>
            <person name="Wakebe H."/>
            <person name="Hishigaki H."/>
            <person name="Watanabe T."/>
            <person name="Sugiyama A."/>
            <person name="Takemoto M."/>
            <person name="Kawakami B."/>
            <person name="Yamazaki M."/>
            <person name="Watanabe K."/>
            <person name="Kumagai A."/>
            <person name="Itakura S."/>
            <person name="Fukuzumi Y."/>
            <person name="Fujimori Y."/>
            <person name="Komiyama M."/>
            <person name="Tashiro H."/>
            <person name="Tanigami A."/>
            <person name="Fujiwara T."/>
            <person name="Ono T."/>
            <person name="Yamada K."/>
            <person name="Fujii Y."/>
            <person name="Ozaki K."/>
            <person name="Hirao M."/>
            <person name="Ohmori Y."/>
            <person name="Kawabata A."/>
            <person name="Hikiji T."/>
            <person name="Kobatake N."/>
            <person name="Inagaki H."/>
            <person name="Ikema Y."/>
            <person name="Okamoto S."/>
            <person name="Okitani R."/>
            <person name="Kawakami T."/>
            <person name="Noguchi S."/>
            <person name="Itoh T."/>
            <person name="Shigeta K."/>
            <person name="Senba T."/>
            <person name="Matsumura K."/>
            <person name="Nakajima Y."/>
            <person name="Mizuno T."/>
            <person name="Morinaga M."/>
            <person name="Sasaki M."/>
            <person name="Togashi T."/>
            <person name="Oyama M."/>
            <person name="Hata H."/>
            <person name="Watanabe M."/>
            <person name="Komatsu T."/>
            <person name="Mizushima-Sugano J."/>
            <person name="Satoh T."/>
            <person name="Shirai Y."/>
            <person name="Takahashi Y."/>
            <person name="Nakagawa K."/>
            <person name="Okumura K."/>
            <person name="Nagase T."/>
            <person name="Nomura N."/>
            <person name="Kikuchi H."/>
            <person name="Masuho Y."/>
            <person name="Yamashita R."/>
            <person name="Nakai K."/>
            <person name="Yada T."/>
            <person name="Nakamura Y."/>
            <person name="Ohara O."/>
            <person name="Isogai T."/>
            <person name="Sugano S."/>
        </authorList>
    </citation>
    <scope>NUCLEOTIDE SEQUENCE [LARGE SCALE MRNA] (ISOFORMS 1; 2 AND 3)</scope>
    <source>
        <tissue>Cerebellum</tissue>
        <tissue>Testis</tissue>
    </source>
</reference>
<reference key="3">
    <citation type="journal article" date="2004" name="Genome Res.">
        <title>The status, quality, and expansion of the NIH full-length cDNA project: the Mammalian Gene Collection (MGC).</title>
        <authorList>
            <consortium name="The MGC Project Team"/>
        </authorList>
    </citation>
    <scope>NUCLEOTIDE SEQUENCE [LARGE SCALE MRNA] (ISOFORM 1)</scope>
    <scope>VARIANT LYS-394</scope>
    <source>
        <tissue>Brain</tissue>
    </source>
</reference>
<reference key="4">
    <citation type="submission" date="2000-10" db="EMBL/GenBank/DDBJ databases">
        <title>A novel testis specific protein (TSP-NY) gene from adult testis.</title>
        <authorList>
            <person name="Li J.M."/>
            <person name="Chen R.H."/>
            <person name="Chen Q."/>
            <person name="Zhu H."/>
            <person name="Lin M."/>
            <person name="Zhou Z.M."/>
            <person name="Wang L.R."/>
            <person name="Zhou Y.D."/>
            <person name="Cheng L.J."/>
            <person name="Ying L.L."/>
            <person name="Zhu H."/>
            <person name="Sha J.H."/>
        </authorList>
    </citation>
    <scope>NUCLEOTIDE SEQUENCE [MRNA] OF 176-684 (ISOFORM 2)</scope>
    <scope>TISSUE SPECIFICITY</scope>
    <source>
        <tissue>Testis</tissue>
    </source>
</reference>
<reference key="5">
    <citation type="journal article" date="2008" name="Prostate">
        <title>ERAP75 functions as a coactivator to enhance estrogen receptor alpha transactivation in prostate stromal cells.</title>
        <authorList>
            <person name="Chen M."/>
            <person name="Ni J."/>
            <person name="Zhang Y."/>
            <person name="Muyan M."/>
            <person name="Yeh S."/>
        </authorList>
    </citation>
    <scope>INTERACTION WITH ESR1</scope>
    <scope>MUTAGENESIS OF 637-LEU-LEU-638 AND 653-LEU-LEU-654</scope>
</reference>
<reference key="6">
    <citation type="journal article" date="2009" name="Carcinogenesis">
        <title>CCDC62/ERAP75 functions as a coactivator to enhance estrogen receptor beta-mediated transactivation and target gene expression in prostate cancer cells.</title>
        <authorList>
            <person name="Chen M."/>
            <person name="Ni J."/>
            <person name="Chang H.C."/>
            <person name="Lin C.Y."/>
            <person name="Muyan M."/>
            <person name="Yeh S."/>
        </authorList>
    </citation>
    <scope>FUNCTION</scope>
    <scope>INTERACTION WITH ESR2</scope>
    <scope>SUBCELLULAR LOCATION</scope>
    <scope>TISSUE SPECIFICITY</scope>
    <scope>MUTAGENESIS OF 637-LEU-LEU-638 AND 653-LEU-LEU-654</scope>
</reference>
<reference key="7">
    <citation type="journal article" date="2009" name="Int. J. Cancer">
        <title>Identification of CCDC62-2 as a novel cancer/testis antigen and its immunogenicity.</title>
        <authorList>
            <person name="Domae S."/>
            <person name="Nakamura Y."/>
            <person name="Nakamura Y."/>
            <person name="Uenaka A."/>
            <person name="Wada H."/>
            <person name="Nakata M."/>
            <person name="Oka M."/>
            <person name="Kishimoto K."/>
            <person name="Tsukamoto G."/>
            <person name="Yoshihama Y."/>
            <person name="Matsuoka J."/>
            <person name="Gochi A."/>
            <person name="Kohno S."/>
            <person name="Saika T."/>
            <person name="Sasaki A."/>
            <person name="Nakayama E."/>
            <person name="Ono T."/>
        </authorList>
    </citation>
    <scope>TISSUE SPECIFICITY</scope>
</reference>
<reference key="8">
    <citation type="journal article" date="2017" name="Biol. Reprod.">
        <title>A nonsense mutation in Ccdc62 gene is responsible for spermiogenesis defects and male infertility in repro29/repro29 mice.</title>
        <authorList>
            <person name="Li Y."/>
            <person name="Li C."/>
            <person name="Lin S."/>
            <person name="Yang B."/>
            <person name="Huang W."/>
            <person name="Wu H."/>
            <person name="Chen Y."/>
            <person name="Yang L."/>
            <person name="Luo M."/>
            <person name="Guo H."/>
            <person name="Chen J."/>
            <person name="Wang T."/>
            <person name="Ma Q."/>
            <person name="Gu Y."/>
            <person name="Mou L."/>
            <person name="Jiang Z."/>
            <person name="Xia J."/>
            <person name="Gui Y."/>
        </authorList>
    </citation>
    <scope>SUBCELLULAR LOCATION</scope>
</reference>
<reference key="9">
    <citation type="journal article" date="2006" name="Science">
        <title>The consensus coding sequences of human breast and colorectal cancers.</title>
        <authorList>
            <person name="Sjoeblom T."/>
            <person name="Jones S."/>
            <person name="Wood L.D."/>
            <person name="Parsons D.W."/>
            <person name="Lin J."/>
            <person name="Barber T.D."/>
            <person name="Mandelker D."/>
            <person name="Leary R.J."/>
            <person name="Ptak J."/>
            <person name="Silliman N."/>
            <person name="Szabo S."/>
            <person name="Buckhaults P."/>
            <person name="Farrell C."/>
            <person name="Meeh P."/>
            <person name="Markowitz S.D."/>
            <person name="Willis J."/>
            <person name="Dawson D."/>
            <person name="Willson J.K.V."/>
            <person name="Gazdar A.F."/>
            <person name="Hartigan J."/>
            <person name="Wu L."/>
            <person name="Liu C."/>
            <person name="Parmigiani G."/>
            <person name="Park B.H."/>
            <person name="Bachman K.E."/>
            <person name="Papadopoulos N."/>
            <person name="Vogelstein B."/>
            <person name="Kinzler K.W."/>
            <person name="Velculescu V.E."/>
        </authorList>
    </citation>
    <scope>VARIANT [LARGE SCALE ANALYSIS] GLU-31</scope>
</reference>
<reference key="10">
    <citation type="journal article" date="2020" name="Hum. Reprod.">
        <title>Exome sequencing reveals novel causes as well as new candidate genes for human globozoospermia.</title>
        <authorList>
            <person name="Oud M.S."/>
            <person name="Okutman O."/>
            <person name="Hendricks L.A.J."/>
            <person name="de Vries P.F."/>
            <person name="Houston B.J."/>
            <person name="Vissers L.E.L.M."/>
            <person name="O'Bryan M.K."/>
            <person name="Ramos L."/>
            <person name="Chemes H.E."/>
            <person name="Viville S."/>
            <person name="Veltman J.A."/>
        </authorList>
    </citation>
    <scope>VARIANTS SPGF67 148-GLN--TYR-684 DEL AND TYR-283</scope>
    <scope>INVOLVEMENT IN SPGF67</scope>
</reference>
<organism>
    <name type="scientific">Homo sapiens</name>
    <name type="common">Human</name>
    <dbReference type="NCBI Taxonomy" id="9606"/>
    <lineage>
        <taxon>Eukaryota</taxon>
        <taxon>Metazoa</taxon>
        <taxon>Chordata</taxon>
        <taxon>Craniata</taxon>
        <taxon>Vertebrata</taxon>
        <taxon>Euteleostomi</taxon>
        <taxon>Mammalia</taxon>
        <taxon>Eutheria</taxon>
        <taxon>Euarchontoglires</taxon>
        <taxon>Primates</taxon>
        <taxon>Haplorrhini</taxon>
        <taxon>Catarrhini</taxon>
        <taxon>Hominidae</taxon>
        <taxon>Homo</taxon>
    </lineage>
</organism>
<accession>Q6P9F0</accession>
<accession>A8K8V1</accession>
<accession>B3KUP3</accession>
<accession>Q6ZVF2</accession>
<accession>Q86VJ0</accession>
<accession>Q9BYZ5</accession>
<evidence type="ECO:0000250" key="1">
    <source>
        <dbReference type="UniProtKB" id="E9PVD1"/>
    </source>
</evidence>
<evidence type="ECO:0000255" key="2"/>
<evidence type="ECO:0000256" key="3">
    <source>
        <dbReference type="SAM" id="MobiDB-lite"/>
    </source>
</evidence>
<evidence type="ECO:0000269" key="4">
    <source>
    </source>
</evidence>
<evidence type="ECO:0000269" key="5">
    <source>
    </source>
</evidence>
<evidence type="ECO:0000269" key="6">
    <source>
    </source>
</evidence>
<evidence type="ECO:0000269" key="7">
    <source>
    </source>
</evidence>
<evidence type="ECO:0000269" key="8">
    <source>
    </source>
</evidence>
<evidence type="ECO:0000269" key="9">
    <source>
    </source>
</evidence>
<evidence type="ECO:0000269" key="10">
    <source>
    </source>
</evidence>
<evidence type="ECO:0000269" key="11">
    <source ref="1"/>
</evidence>
<evidence type="ECO:0000269" key="12">
    <source ref="4"/>
</evidence>
<evidence type="ECO:0000303" key="13">
    <source>
    </source>
</evidence>
<evidence type="ECO:0000303" key="14">
    <source ref="1"/>
</evidence>
<evidence type="ECO:0000303" key="15">
    <source ref="4"/>
</evidence>
<evidence type="ECO:0000305" key="16"/>
<keyword id="KW-0025">Alternative splicing</keyword>
<keyword id="KW-0175">Coiled coil</keyword>
<keyword id="KW-0963">Cytoplasm</keyword>
<keyword id="KW-0968">Cytoplasmic vesicle</keyword>
<keyword id="KW-0225">Disease variant</keyword>
<keyword id="KW-0539">Nucleus</keyword>
<keyword id="KW-1267">Proteomics identification</keyword>
<keyword id="KW-1185">Reference proteome</keyword>
<keyword id="KW-0677">Repeat</keyword>
<dbReference type="EMBL" id="AY254201">
    <property type="protein sequence ID" value="AAP13075.1"/>
    <property type="molecule type" value="mRNA"/>
</dbReference>
<dbReference type="EMBL" id="AK097663">
    <property type="protein sequence ID" value="BAG53505.1"/>
    <property type="molecule type" value="mRNA"/>
</dbReference>
<dbReference type="EMBL" id="AK124633">
    <property type="protein sequence ID" value="BAC85909.1"/>
    <property type="molecule type" value="mRNA"/>
</dbReference>
<dbReference type="EMBL" id="AK292466">
    <property type="protein sequence ID" value="BAF85155.1"/>
    <property type="molecule type" value="mRNA"/>
</dbReference>
<dbReference type="EMBL" id="BC060796">
    <property type="protein sequence ID" value="AAH60796.1"/>
    <property type="molecule type" value="mRNA"/>
</dbReference>
<dbReference type="EMBL" id="AY009105">
    <property type="protein sequence ID" value="AAG49396.1"/>
    <property type="status" value="ALT_INIT"/>
    <property type="molecule type" value="mRNA"/>
</dbReference>
<dbReference type="CCDS" id="CCDS9238.1">
    <molecule id="Q6P9F0-1"/>
</dbReference>
<dbReference type="RefSeq" id="NP_958843.2">
    <molecule id="Q6P9F0-1"/>
    <property type="nucleotide sequence ID" value="NM_201435.5"/>
</dbReference>
<dbReference type="RefSeq" id="XP_006719706.1">
    <molecule id="Q6P9F0-1"/>
    <property type="nucleotide sequence ID" value="XM_006719643.3"/>
</dbReference>
<dbReference type="RefSeq" id="XP_006719707.1">
    <molecule id="Q6P9F0-2"/>
    <property type="nucleotide sequence ID" value="XM_006719644.3"/>
</dbReference>
<dbReference type="RefSeq" id="XP_054229472.1">
    <molecule id="Q6P9F0-1"/>
    <property type="nucleotide sequence ID" value="XM_054373497.1"/>
</dbReference>
<dbReference type="RefSeq" id="XP_054229474.1">
    <molecule id="Q6P9F0-2"/>
    <property type="nucleotide sequence ID" value="XM_054373499.1"/>
</dbReference>
<dbReference type="SMR" id="Q6P9F0"/>
<dbReference type="BioGRID" id="124180">
    <property type="interactions" value="4"/>
</dbReference>
<dbReference type="CORUM" id="Q6P9F0"/>
<dbReference type="FunCoup" id="Q6P9F0">
    <property type="interactions" value="410"/>
</dbReference>
<dbReference type="IntAct" id="Q6P9F0">
    <property type="interactions" value="4"/>
</dbReference>
<dbReference type="STRING" id="9606.ENSP00000253079"/>
<dbReference type="GlyGen" id="Q6P9F0">
    <property type="glycosylation" value="1 site, 1 O-linked glycan (1 site)"/>
</dbReference>
<dbReference type="iPTMnet" id="Q6P9F0"/>
<dbReference type="PhosphoSitePlus" id="Q6P9F0"/>
<dbReference type="BioMuta" id="CCDC62"/>
<dbReference type="DMDM" id="108935965"/>
<dbReference type="jPOST" id="Q6P9F0"/>
<dbReference type="MassIVE" id="Q6P9F0"/>
<dbReference type="PaxDb" id="9606-ENSP00000253079"/>
<dbReference type="PeptideAtlas" id="Q6P9F0"/>
<dbReference type="ProteomicsDB" id="67037">
    <molecule id="Q6P9F0-1"/>
</dbReference>
<dbReference type="ProteomicsDB" id="67038">
    <molecule id="Q6P9F0-2"/>
</dbReference>
<dbReference type="ProteomicsDB" id="67039">
    <molecule id="Q6P9F0-3"/>
</dbReference>
<dbReference type="Antibodypedia" id="52252">
    <property type="antibodies" value="67 antibodies from 16 providers"/>
</dbReference>
<dbReference type="DNASU" id="84660"/>
<dbReference type="Ensembl" id="ENST00000253079.11">
    <molecule id="Q6P9F0-1"/>
    <property type="protein sequence ID" value="ENSP00000253079.6"/>
    <property type="gene ID" value="ENSG00000130783.14"/>
</dbReference>
<dbReference type="Ensembl" id="ENST00000341952.8">
    <molecule id="Q6P9F0-2"/>
    <property type="protein sequence ID" value="ENSP00000341471.4"/>
    <property type="gene ID" value="ENSG00000130783.14"/>
</dbReference>
<dbReference type="Ensembl" id="ENST00000392441.8">
    <molecule id="Q6P9F0-2"/>
    <property type="protein sequence ID" value="ENSP00000376236.4"/>
    <property type="gene ID" value="ENSG00000130783.14"/>
</dbReference>
<dbReference type="Ensembl" id="ENST00000537566.5">
    <molecule id="Q6P9F0-3"/>
    <property type="protein sequence ID" value="ENSP00000445045.1"/>
    <property type="gene ID" value="ENSG00000130783.14"/>
</dbReference>
<dbReference type="GeneID" id="84660"/>
<dbReference type="KEGG" id="hsa:84660"/>
<dbReference type="MANE-Select" id="ENST00000253079.11">
    <property type="protein sequence ID" value="ENSP00000253079.6"/>
    <property type="RefSeq nucleotide sequence ID" value="NM_201435.5"/>
    <property type="RefSeq protein sequence ID" value="NP_958843.2"/>
</dbReference>
<dbReference type="UCSC" id="uc001udc.4">
    <molecule id="Q6P9F0-1"/>
    <property type="organism name" value="human"/>
</dbReference>
<dbReference type="AGR" id="HGNC:30723"/>
<dbReference type="CTD" id="84660"/>
<dbReference type="DisGeNET" id="84660"/>
<dbReference type="GeneCards" id="CCDC62"/>
<dbReference type="HGNC" id="HGNC:30723">
    <property type="gene designation" value="CCDC62"/>
</dbReference>
<dbReference type="HPA" id="ENSG00000130783">
    <property type="expression patterns" value="Tissue enriched (testis)"/>
</dbReference>
<dbReference type="MalaCards" id="CCDC62"/>
<dbReference type="MIM" id="613481">
    <property type="type" value="gene"/>
</dbReference>
<dbReference type="MIM" id="619803">
    <property type="type" value="phenotype"/>
</dbReference>
<dbReference type="neXtProt" id="NX_Q6P9F0"/>
<dbReference type="OpenTargets" id="ENSG00000130783"/>
<dbReference type="PharmGKB" id="PA143485414"/>
<dbReference type="VEuPathDB" id="HostDB:ENSG00000130783"/>
<dbReference type="eggNOG" id="ENOG502RHSF">
    <property type="taxonomic scope" value="Eukaryota"/>
</dbReference>
<dbReference type="GeneTree" id="ENSGT00400000022269"/>
<dbReference type="HOGENOM" id="CLU_025504_0_0_1"/>
<dbReference type="InParanoid" id="Q6P9F0"/>
<dbReference type="OMA" id="QFLHFNV"/>
<dbReference type="OrthoDB" id="6155277at2759"/>
<dbReference type="PAN-GO" id="Q6P9F0">
    <property type="GO annotations" value="3 GO annotations based on evolutionary models"/>
</dbReference>
<dbReference type="PhylomeDB" id="Q6P9F0"/>
<dbReference type="TreeFam" id="TF329149"/>
<dbReference type="PathwayCommons" id="Q6P9F0"/>
<dbReference type="SignaLink" id="Q6P9F0"/>
<dbReference type="BioGRID-ORCS" id="84660">
    <property type="hits" value="33 hits in 1153 CRISPR screens"/>
</dbReference>
<dbReference type="ChiTaRS" id="CCDC62">
    <property type="organism name" value="human"/>
</dbReference>
<dbReference type="GenomeRNAi" id="84660"/>
<dbReference type="Pharos" id="Q6P9F0">
    <property type="development level" value="Tbio"/>
</dbReference>
<dbReference type="PRO" id="PR:Q6P9F0"/>
<dbReference type="Proteomes" id="UP000005640">
    <property type="component" value="Chromosome 12"/>
</dbReference>
<dbReference type="RNAct" id="Q6P9F0">
    <property type="molecule type" value="protein"/>
</dbReference>
<dbReference type="Bgee" id="ENSG00000130783">
    <property type="expression patterns" value="Expressed in sperm and 107 other cell types or tissues"/>
</dbReference>
<dbReference type="ExpressionAtlas" id="Q6P9F0">
    <property type="expression patterns" value="baseline and differential"/>
</dbReference>
<dbReference type="GO" id="GO:0001669">
    <property type="term" value="C:acrosomal vesicle"/>
    <property type="evidence" value="ECO:0000314"/>
    <property type="project" value="UniProtKB"/>
</dbReference>
<dbReference type="GO" id="GO:0005815">
    <property type="term" value="C:microtubule organizing center"/>
    <property type="evidence" value="ECO:0000318"/>
    <property type="project" value="GO_Central"/>
</dbReference>
<dbReference type="GO" id="GO:0005634">
    <property type="term" value="C:nucleus"/>
    <property type="evidence" value="ECO:0000314"/>
    <property type="project" value="ParkinsonsUK-UCL"/>
</dbReference>
<dbReference type="GO" id="GO:0030331">
    <property type="term" value="F:nuclear estrogen receptor binding"/>
    <property type="evidence" value="ECO:0000353"/>
    <property type="project" value="ParkinsonsUK-UCL"/>
</dbReference>
<dbReference type="GO" id="GO:0003713">
    <property type="term" value="F:transcription coactivator activity"/>
    <property type="evidence" value="ECO:0000353"/>
    <property type="project" value="ParkinsonsUK-UCL"/>
</dbReference>
<dbReference type="GO" id="GO:0001835">
    <property type="term" value="P:blastocyst hatching"/>
    <property type="evidence" value="ECO:0007669"/>
    <property type="project" value="Ensembl"/>
</dbReference>
<dbReference type="GO" id="GO:0071392">
    <property type="term" value="P:cellular response to estradiol stimulus"/>
    <property type="evidence" value="ECO:0000314"/>
    <property type="project" value="ParkinsonsUK-UCL"/>
</dbReference>
<dbReference type="GO" id="GO:0030520">
    <property type="term" value="P:estrogen receptor signaling pathway"/>
    <property type="evidence" value="ECO:0000314"/>
    <property type="project" value="ParkinsonsUK-UCL"/>
</dbReference>
<dbReference type="GO" id="GO:0045944">
    <property type="term" value="P:positive regulation of transcription by RNA polymerase II"/>
    <property type="evidence" value="ECO:0000314"/>
    <property type="project" value="ParkinsonsUK-UCL"/>
</dbReference>
<dbReference type="GO" id="GO:0007286">
    <property type="term" value="P:spermatid development"/>
    <property type="evidence" value="ECO:0000315"/>
    <property type="project" value="UniProtKB"/>
</dbReference>
<comment type="function">
    <text evidence="1 7">Nuclear receptor coactivator that can enhance preferentially estrogen receptors ESR1 and ESR2 transactivation. Also modulates progesterone/PGR, glucocorticoid/NR3C1 and androgen/AR receptors transactivation, although at lower level; little effect on vitamin D receptor/VDR. Required for normal spermiogenesis. It probably plays a role in acrosome formation (By similarity).</text>
</comment>
<comment type="subunit">
    <text evidence="1 6 7">Interacts with ESR1 and ESR2 in the presence of estradiol/E2. The interaction with ESR2 recruits CCDC62 to ER target genes, including cyclin-D1/CCND1 AP-1 promoter. Interacts with GOPC (By similarity).</text>
</comment>
<comment type="interaction">
    <interactant intactId="EBI-11176612">
        <id>Q6P9F0</id>
    </interactant>
    <interactant intactId="EBI-11176604">
        <id>Q92731-1</id>
        <label>ESR2</label>
    </interactant>
    <organismsDiffer>false</organismsDiffer>
    <experiments>6</experiments>
</comment>
<comment type="subcellular location">
    <subcellularLocation>
        <location evidence="7">Cytoplasm</location>
    </subcellularLocation>
    <subcellularLocation>
        <location evidence="7">Nucleus</location>
    </subcellularLocation>
    <subcellularLocation>
        <location evidence="9">Cytoplasmic vesicle</location>
        <location evidence="9">Secretory vesicle</location>
        <location evidence="9">Acrosome</location>
    </subcellularLocation>
    <text>Mainly nuclear.</text>
</comment>
<comment type="alternative products">
    <event type="alternative splicing"/>
    <isoform>
        <id>Q6P9F0-1</id>
        <name>1</name>
        <sequence type="displayed"/>
    </isoform>
    <isoform>
        <id>Q6P9F0-2</id>
        <name>2</name>
        <sequence type="described" ref="VSP_019329"/>
    </isoform>
    <isoform>
        <id>Q6P9F0-3</id>
        <name>3</name>
        <sequence type="described" ref="VSP_019327 VSP_019328"/>
    </isoform>
</comment>
<comment type="tissue specificity">
    <text evidence="7 8 11 12">Highly expressed in adult testis. Expressed in both prostate epithelial and stromal cells, with predominant expression in epithelial cells (at protein level) (PubMed:19126643). Not detected in prostate by RT-PCR (PubMed:19165854). Overexpressed in various cancers.</text>
</comment>
<comment type="domain">
    <text>Contains 2 Leu-Xaa-Xaa-Leu-Leu (LXXLL) motifs. The first one is essential for the association with ESR1 and ESR2.</text>
</comment>
<comment type="disease" evidence="10">
    <disease id="DI-06370">
        <name>Spermatogenic failure 67</name>
        <acronym>SPGF67</acronym>
        <description>An autosomal recessive male infertility disorder characterized by globozoospermia. Affected individuals have a normal sperm count, but spermatozoa are round-headed and lack the acrosome. In addition to pure globozoospermia, some patients have a mixture of acrosomeless spermatozoa and spermatozoa with small or detached acrosomes, which is defined as acrosomal hypoplasia.</description>
        <dbReference type="MIM" id="619803"/>
    </disease>
    <text>The disease may be caused by variants affecting the gene represented in this entry.</text>
</comment>
<comment type="sequence caution" evidence="16">
    <conflict type="erroneous initiation">
        <sequence resource="EMBL-CDS" id="AAG49396"/>
    </conflict>
    <text>Truncated N-terminus.</text>
</comment>
<protein>
    <recommendedName>
        <fullName>Coiled-coil domain-containing protein 62</fullName>
    </recommendedName>
    <alternativeName>
        <fullName>Protein TSP-NY</fullName>
    </alternativeName>
    <alternativeName>
        <fullName>Protein aaa</fullName>
    </alternativeName>
</protein>
<sequence>MNPPAAFLAGRQNIGSEVEISTIEKQRKELQLLIGELKDRDKELNDMVAVHQQQLLSWEEDRQKVLTLEERCSKLEGELHKRTEIIRSLTKKVKALESNQMECQTALQKTQLQLQEMAQKATHSSLLSEDLEARNETLSNTLVELSAQVGQLQAREQALTTMIKLKDKDIIEAVNHIADCSGKFKMLEHALRDAKMAETCIVKEKQDYKQKLKALKIEVNKLKEDLNEKTTENNEQREEIIRLKQEKSCLHDELLFTVEREKRKDELLNIAKSKQERTNSELHNLRQIYVKQQSDLQFLNFNVENSQELIQMYDSKMEESKALDSSRDMCLSDLENNHPKVDIKREKNQKSLFKDQKFEAMLVQQNRSDKSSCDECKEKKQQIDTVFGEKSVITLSSIFTKDLVEKHNLPWSLGGKTQIEPENKITLCKIHTKSPKCHGTGVQNEGKQPSETPTLSDEKQWHDVSVYLGLTNCPSSKHPEKLDVECQDQMERSEISCCQKNEACLGESGMCDSKCCHPSNFIIEAPGHMSDVEWMSIFKPSKMQRIVRLKSGCTCSESICGTQHDSPASELIAIQDSHSLGSSKSALREDETESSSNKKNSPTSLLIYKDAPAFNEKASIVLPSQDDFSPTSKLQRLLAESRQMVTDLELSTLLPISHENLTGSATNKSEVPEESAQKNTFVSY</sequence>